<name>XGEA_ASPTN</name>
<evidence type="ECO:0000250" key="1"/>
<evidence type="ECO:0000255" key="2"/>
<evidence type="ECO:0000305" key="3"/>
<accession>Q0CRC9</accession>
<keyword id="KW-0119">Carbohydrate metabolism</keyword>
<keyword id="KW-0961">Cell wall biogenesis/degradation</keyword>
<keyword id="KW-0325">Glycoprotein</keyword>
<keyword id="KW-0326">Glycosidase</keyword>
<keyword id="KW-0378">Hydrolase</keyword>
<keyword id="KW-0624">Polysaccharide degradation</keyword>
<keyword id="KW-1185">Reference proteome</keyword>
<keyword id="KW-0964">Secreted</keyword>
<keyword id="KW-0732">Signal</keyword>
<sequence>MKLSVLSLASLASAAALNAKVLTGKSLTRRADFCDQWGQVTTGNFILYNNLWGQGNADSGSQCTGLDSSSGNDSIAWHTSWSWSGGAGQVKSYANAAYVFTPKQLSALGSIPTSWSWKYTGSDIIANVAYDLFTSSTADGDNEYEIMIWLAALGGAGPISSTGSPVASPTVAGHSWDLYSGMNGQMQVYSFVASSQTESFSADLQEFIMYLQSNQGLPTSQYLVDVQAGTEPFSGSDATLTTSAYSVSVA</sequence>
<dbReference type="EC" id="3.2.1.151"/>
<dbReference type="EMBL" id="CH476598">
    <property type="protein sequence ID" value="EAU35557.1"/>
    <property type="status" value="ALT_SEQ"/>
    <property type="molecule type" value="Genomic_DNA"/>
</dbReference>
<dbReference type="RefSeq" id="XP_001212933.1">
    <property type="nucleotide sequence ID" value="XM_001212933.1"/>
</dbReference>
<dbReference type="SMR" id="Q0CRC9"/>
<dbReference type="STRING" id="341663.Q0CRC9"/>
<dbReference type="GlyCosmos" id="Q0CRC9">
    <property type="glycosylation" value="1 site, No reported glycans"/>
</dbReference>
<dbReference type="GeneID" id="4318627"/>
<dbReference type="eggNOG" id="ENOG502S675">
    <property type="taxonomic scope" value="Eukaryota"/>
</dbReference>
<dbReference type="OrthoDB" id="95118at2759"/>
<dbReference type="Proteomes" id="UP000007963">
    <property type="component" value="Unassembled WGS sequence"/>
</dbReference>
<dbReference type="GO" id="GO:0005576">
    <property type="term" value="C:extracellular region"/>
    <property type="evidence" value="ECO:0007669"/>
    <property type="project" value="UniProtKB-SubCell"/>
</dbReference>
<dbReference type="GO" id="GO:0008810">
    <property type="term" value="F:cellulase activity"/>
    <property type="evidence" value="ECO:0007669"/>
    <property type="project" value="InterPro"/>
</dbReference>
<dbReference type="GO" id="GO:0033946">
    <property type="term" value="F:xyloglucan-specific endo-beta-1,4-glucanase activity"/>
    <property type="evidence" value="ECO:0007669"/>
    <property type="project" value="UniProtKB-EC"/>
</dbReference>
<dbReference type="GO" id="GO:0071555">
    <property type="term" value="P:cell wall organization"/>
    <property type="evidence" value="ECO:0007669"/>
    <property type="project" value="UniProtKB-KW"/>
</dbReference>
<dbReference type="GO" id="GO:0000272">
    <property type="term" value="P:polysaccharide catabolic process"/>
    <property type="evidence" value="ECO:0007669"/>
    <property type="project" value="UniProtKB-KW"/>
</dbReference>
<dbReference type="Gene3D" id="2.60.120.180">
    <property type="match status" value="1"/>
</dbReference>
<dbReference type="InterPro" id="IPR013320">
    <property type="entry name" value="ConA-like_dom_sf"/>
</dbReference>
<dbReference type="InterPro" id="IPR013319">
    <property type="entry name" value="GH11/12"/>
</dbReference>
<dbReference type="InterPro" id="IPR002594">
    <property type="entry name" value="GH12"/>
</dbReference>
<dbReference type="PANTHER" id="PTHR34002">
    <property type="entry name" value="BLR1656 PROTEIN"/>
    <property type="match status" value="1"/>
</dbReference>
<dbReference type="PANTHER" id="PTHR34002:SF9">
    <property type="entry name" value="XYLOGLUCAN-SPECIFIC ENDO-BETA-1,4-GLUCANASE A"/>
    <property type="match status" value="1"/>
</dbReference>
<dbReference type="Pfam" id="PF01670">
    <property type="entry name" value="Glyco_hydro_12"/>
    <property type="match status" value="1"/>
</dbReference>
<dbReference type="SUPFAM" id="SSF49899">
    <property type="entry name" value="Concanavalin A-like lectins/glucanases"/>
    <property type="match status" value="1"/>
</dbReference>
<reference key="1">
    <citation type="submission" date="2005-09" db="EMBL/GenBank/DDBJ databases">
        <title>Annotation of the Aspergillus terreus NIH2624 genome.</title>
        <authorList>
            <person name="Birren B.W."/>
            <person name="Lander E.S."/>
            <person name="Galagan J.E."/>
            <person name="Nusbaum C."/>
            <person name="Devon K."/>
            <person name="Henn M."/>
            <person name="Ma L.-J."/>
            <person name="Jaffe D.B."/>
            <person name="Butler J."/>
            <person name="Alvarez P."/>
            <person name="Gnerre S."/>
            <person name="Grabherr M."/>
            <person name="Kleber M."/>
            <person name="Mauceli E.W."/>
            <person name="Brockman W."/>
            <person name="Rounsley S."/>
            <person name="Young S.K."/>
            <person name="LaButti K."/>
            <person name="Pushparaj V."/>
            <person name="DeCaprio D."/>
            <person name="Crawford M."/>
            <person name="Koehrsen M."/>
            <person name="Engels R."/>
            <person name="Montgomery P."/>
            <person name="Pearson M."/>
            <person name="Howarth C."/>
            <person name="Larson L."/>
            <person name="Luoma S."/>
            <person name="White J."/>
            <person name="Alvarado L."/>
            <person name="Kodira C.D."/>
            <person name="Zeng Q."/>
            <person name="Oleary S."/>
            <person name="Yandava C."/>
            <person name="Denning D.W."/>
            <person name="Nierman W.C."/>
            <person name="Milne T."/>
            <person name="Madden K."/>
        </authorList>
    </citation>
    <scope>NUCLEOTIDE SEQUENCE [LARGE SCALE GENOMIC DNA]</scope>
    <source>
        <strain>NIH 2624 / FGSC A1156</strain>
    </source>
</reference>
<comment type="function">
    <text evidence="1">Catalyzes endohydrolysis of 1,4-beta-D-glucosidic linkages in xyloglucan with retention of the beta-configuration of the glycosyl residues. Specific for xyloglucan and does not hydrolyze other cell wall components (By similarity).</text>
</comment>
<comment type="catalytic activity">
    <reaction>
        <text>xyloglucan + H2O = xyloglucan oligosaccharides.</text>
        <dbReference type="EC" id="3.2.1.151"/>
    </reaction>
</comment>
<comment type="subcellular location">
    <subcellularLocation>
        <location evidence="3">Secreted</location>
    </subcellularLocation>
</comment>
<comment type="similarity">
    <text evidence="3">Belongs to the glycosyl hydrolase 12 (cellulase H) family.</text>
</comment>
<comment type="sequence caution" evidence="3">
    <conflict type="erroneous gene model prediction">
        <sequence resource="EMBL-CDS" id="EAU35557"/>
    </conflict>
</comment>
<proteinExistence type="inferred from homology"/>
<feature type="signal peptide" evidence="2">
    <location>
        <begin position="1"/>
        <end position="19"/>
    </location>
</feature>
<feature type="chain" id="PRO_0000394074" description="Probable xyloglucan-specific endo-beta-1,4-glucanase A">
    <location>
        <begin position="20"/>
        <end position="250"/>
    </location>
</feature>
<feature type="glycosylation site" description="N-linked (GlcNAc...) asparagine" evidence="2">
    <location>
        <position position="72"/>
    </location>
</feature>
<protein>
    <recommendedName>
        <fullName>Probable xyloglucan-specific endo-beta-1,4-glucanase A</fullName>
        <ecNumber>3.2.1.151</ecNumber>
    </recommendedName>
    <alternativeName>
        <fullName>Xyloglucanase A</fullName>
    </alternativeName>
    <alternativeName>
        <fullName>Xyloglucanendohydrolase A</fullName>
    </alternativeName>
</protein>
<organism>
    <name type="scientific">Aspergillus terreus (strain NIH 2624 / FGSC A1156)</name>
    <dbReference type="NCBI Taxonomy" id="341663"/>
    <lineage>
        <taxon>Eukaryota</taxon>
        <taxon>Fungi</taxon>
        <taxon>Dikarya</taxon>
        <taxon>Ascomycota</taxon>
        <taxon>Pezizomycotina</taxon>
        <taxon>Eurotiomycetes</taxon>
        <taxon>Eurotiomycetidae</taxon>
        <taxon>Eurotiales</taxon>
        <taxon>Aspergillaceae</taxon>
        <taxon>Aspergillus</taxon>
        <taxon>Aspergillus subgen. Circumdati</taxon>
    </lineage>
</organism>
<gene>
    <name type="primary">xgeA</name>
    <name type="ORF">ATEG_03755</name>
</gene>